<proteinExistence type="inferred from homology"/>
<evidence type="ECO:0000250" key="1"/>
<evidence type="ECO:0000256" key="2">
    <source>
        <dbReference type="SAM" id="MobiDB-lite"/>
    </source>
</evidence>
<evidence type="ECO:0000305" key="3"/>
<organism>
    <name type="scientific">Schizosaccharomyces pombe (strain 972 / ATCC 24843)</name>
    <name type="common">Fission yeast</name>
    <dbReference type="NCBI Taxonomy" id="284812"/>
    <lineage>
        <taxon>Eukaryota</taxon>
        <taxon>Fungi</taxon>
        <taxon>Dikarya</taxon>
        <taxon>Ascomycota</taxon>
        <taxon>Taphrinomycotina</taxon>
        <taxon>Schizosaccharomycetes</taxon>
        <taxon>Schizosaccharomycetales</taxon>
        <taxon>Schizosaccharomycetaceae</taxon>
        <taxon>Schizosaccharomyces</taxon>
    </lineage>
</organism>
<accession>P87145</accession>
<dbReference type="EMBL" id="CU329671">
    <property type="protein sequence ID" value="CAB08779.1"/>
    <property type="molecule type" value="Genomic_DNA"/>
</dbReference>
<dbReference type="PIR" id="T39998">
    <property type="entry name" value="T39998"/>
</dbReference>
<dbReference type="BioGRID" id="277017">
    <property type="interactions" value="25"/>
</dbReference>
<dbReference type="FunCoup" id="P87145">
    <property type="interactions" value="684"/>
</dbReference>
<dbReference type="STRING" id="284812.P87145"/>
<dbReference type="iPTMnet" id="P87145"/>
<dbReference type="PaxDb" id="4896-SPBC25H2.03.1"/>
<dbReference type="EnsemblFungi" id="SPBC25H2.03.1">
    <property type="protein sequence ID" value="SPBC25H2.03.1:pep"/>
    <property type="gene ID" value="SPBC25H2.03"/>
</dbReference>
<dbReference type="KEGG" id="spo:2540489"/>
<dbReference type="PomBase" id="SPBC25H2.03"/>
<dbReference type="VEuPathDB" id="FungiDB:SPBC25H2.03"/>
<dbReference type="eggNOG" id="KOG0212">
    <property type="taxonomic scope" value="Eukaryota"/>
</dbReference>
<dbReference type="HOGENOM" id="CLU_007740_0_0_1"/>
<dbReference type="InParanoid" id="P87145"/>
<dbReference type="OMA" id="QCYQHVS"/>
<dbReference type="PhylomeDB" id="P87145"/>
<dbReference type="PRO" id="PR:P87145"/>
<dbReference type="Proteomes" id="UP000002485">
    <property type="component" value="Chromosome II"/>
</dbReference>
<dbReference type="GO" id="GO:0005737">
    <property type="term" value="C:cytoplasm"/>
    <property type="evidence" value="ECO:0007005"/>
    <property type="project" value="PomBase"/>
</dbReference>
<dbReference type="GO" id="GO:0010008">
    <property type="term" value="C:endosome membrane"/>
    <property type="evidence" value="ECO:0000318"/>
    <property type="project" value="GO_Central"/>
</dbReference>
<dbReference type="GO" id="GO:0000329">
    <property type="term" value="C:fungal-type vacuole membrane"/>
    <property type="evidence" value="ECO:0000318"/>
    <property type="project" value="GO_Central"/>
</dbReference>
<dbReference type="GO" id="GO:0070772">
    <property type="term" value="C:PAS complex"/>
    <property type="evidence" value="ECO:0000318"/>
    <property type="project" value="GO_Central"/>
</dbReference>
<dbReference type="GO" id="GO:0006661">
    <property type="term" value="P:phosphatidylinositol biosynthetic process"/>
    <property type="evidence" value="ECO:0000318"/>
    <property type="project" value="GO_Central"/>
</dbReference>
<dbReference type="FunFam" id="1.25.10.10:FF:002086">
    <property type="entry name" value="Protein VAC14 homolog"/>
    <property type="match status" value="1"/>
</dbReference>
<dbReference type="Gene3D" id="1.25.10.10">
    <property type="entry name" value="Leucine-rich Repeat Variant"/>
    <property type="match status" value="2"/>
</dbReference>
<dbReference type="InterPro" id="IPR011989">
    <property type="entry name" value="ARM-like"/>
</dbReference>
<dbReference type="InterPro" id="IPR016024">
    <property type="entry name" value="ARM-type_fold"/>
</dbReference>
<dbReference type="InterPro" id="IPR026825">
    <property type="entry name" value="Vac14"/>
</dbReference>
<dbReference type="InterPro" id="IPR021841">
    <property type="entry name" value="VAC14_Fig4p-bd"/>
</dbReference>
<dbReference type="PANTHER" id="PTHR16023:SF0">
    <property type="entry name" value="PROTEIN VAC14 HOMOLOG"/>
    <property type="match status" value="1"/>
</dbReference>
<dbReference type="PANTHER" id="PTHR16023">
    <property type="entry name" value="TAX1 BINDING PROTEIN-RELATED"/>
    <property type="match status" value="1"/>
</dbReference>
<dbReference type="Pfam" id="PF12755">
    <property type="entry name" value="Vac14_Fab1_bd"/>
    <property type="match status" value="1"/>
</dbReference>
<dbReference type="Pfam" id="PF11916">
    <property type="entry name" value="Vac14_Fig4_bd"/>
    <property type="match status" value="1"/>
</dbReference>
<dbReference type="SUPFAM" id="SSF48371">
    <property type="entry name" value="ARM repeat"/>
    <property type="match status" value="1"/>
</dbReference>
<reference key="1">
    <citation type="journal article" date="2002" name="Nature">
        <title>The genome sequence of Schizosaccharomyces pombe.</title>
        <authorList>
            <person name="Wood V."/>
            <person name="Gwilliam R."/>
            <person name="Rajandream M.A."/>
            <person name="Lyne M.H."/>
            <person name="Lyne R."/>
            <person name="Stewart A."/>
            <person name="Sgouros J.G."/>
            <person name="Peat N."/>
            <person name="Hayles J."/>
            <person name="Baker S.G."/>
            <person name="Basham D."/>
            <person name="Bowman S."/>
            <person name="Brooks K."/>
            <person name="Brown D."/>
            <person name="Brown S."/>
            <person name="Chillingworth T."/>
            <person name="Churcher C.M."/>
            <person name="Collins M."/>
            <person name="Connor R."/>
            <person name="Cronin A."/>
            <person name="Davis P."/>
            <person name="Feltwell T."/>
            <person name="Fraser A."/>
            <person name="Gentles S."/>
            <person name="Goble A."/>
            <person name="Hamlin N."/>
            <person name="Harris D.E."/>
            <person name="Hidalgo J."/>
            <person name="Hodgson G."/>
            <person name="Holroyd S."/>
            <person name="Hornsby T."/>
            <person name="Howarth S."/>
            <person name="Huckle E.J."/>
            <person name="Hunt S."/>
            <person name="Jagels K."/>
            <person name="James K.D."/>
            <person name="Jones L."/>
            <person name="Jones M."/>
            <person name="Leather S."/>
            <person name="McDonald S."/>
            <person name="McLean J."/>
            <person name="Mooney P."/>
            <person name="Moule S."/>
            <person name="Mungall K.L."/>
            <person name="Murphy L.D."/>
            <person name="Niblett D."/>
            <person name="Odell C."/>
            <person name="Oliver K."/>
            <person name="O'Neil S."/>
            <person name="Pearson D."/>
            <person name="Quail M.A."/>
            <person name="Rabbinowitsch E."/>
            <person name="Rutherford K.M."/>
            <person name="Rutter S."/>
            <person name="Saunders D."/>
            <person name="Seeger K."/>
            <person name="Sharp S."/>
            <person name="Skelton J."/>
            <person name="Simmonds M.N."/>
            <person name="Squares R."/>
            <person name="Squares S."/>
            <person name="Stevens K."/>
            <person name="Taylor K."/>
            <person name="Taylor R.G."/>
            <person name="Tivey A."/>
            <person name="Walsh S.V."/>
            <person name="Warren T."/>
            <person name="Whitehead S."/>
            <person name="Woodward J.R."/>
            <person name="Volckaert G."/>
            <person name="Aert R."/>
            <person name="Robben J."/>
            <person name="Grymonprez B."/>
            <person name="Weltjens I."/>
            <person name="Vanstreels E."/>
            <person name="Rieger M."/>
            <person name="Schaefer M."/>
            <person name="Mueller-Auer S."/>
            <person name="Gabel C."/>
            <person name="Fuchs M."/>
            <person name="Duesterhoeft A."/>
            <person name="Fritzc C."/>
            <person name="Holzer E."/>
            <person name="Moestl D."/>
            <person name="Hilbert H."/>
            <person name="Borzym K."/>
            <person name="Langer I."/>
            <person name="Beck A."/>
            <person name="Lehrach H."/>
            <person name="Reinhardt R."/>
            <person name="Pohl T.M."/>
            <person name="Eger P."/>
            <person name="Zimmermann W."/>
            <person name="Wedler H."/>
            <person name="Wambutt R."/>
            <person name="Purnelle B."/>
            <person name="Goffeau A."/>
            <person name="Cadieu E."/>
            <person name="Dreano S."/>
            <person name="Gloux S."/>
            <person name="Lelaure V."/>
            <person name="Mottier S."/>
            <person name="Galibert F."/>
            <person name="Aves S.J."/>
            <person name="Xiang Z."/>
            <person name="Hunt C."/>
            <person name="Moore K."/>
            <person name="Hurst S.M."/>
            <person name="Lucas M."/>
            <person name="Rochet M."/>
            <person name="Gaillardin C."/>
            <person name="Tallada V.A."/>
            <person name="Garzon A."/>
            <person name="Thode G."/>
            <person name="Daga R.R."/>
            <person name="Cruzado L."/>
            <person name="Jimenez J."/>
            <person name="Sanchez M."/>
            <person name="del Rey F."/>
            <person name="Benito J."/>
            <person name="Dominguez A."/>
            <person name="Revuelta J.L."/>
            <person name="Moreno S."/>
            <person name="Armstrong J."/>
            <person name="Forsburg S.L."/>
            <person name="Cerutti L."/>
            <person name="Lowe T."/>
            <person name="McCombie W.R."/>
            <person name="Paulsen I."/>
            <person name="Potashkin J."/>
            <person name="Shpakovski G.V."/>
            <person name="Ussery D."/>
            <person name="Barrell B.G."/>
            <person name="Nurse P."/>
        </authorList>
    </citation>
    <scope>NUCLEOTIDE SEQUENCE [LARGE SCALE GENOMIC DNA]</scope>
    <source>
        <strain>972 / ATCC 24843</strain>
    </source>
</reference>
<reference key="2">
    <citation type="journal article" date="2006" name="Nat. Biotechnol.">
        <title>ORFeome cloning and global analysis of protein localization in the fission yeast Schizosaccharomyces pombe.</title>
        <authorList>
            <person name="Matsuyama A."/>
            <person name="Arai R."/>
            <person name="Yashiroda Y."/>
            <person name="Shirai A."/>
            <person name="Kamata A."/>
            <person name="Sekido S."/>
            <person name="Kobayashi Y."/>
            <person name="Hashimoto A."/>
            <person name="Hamamoto M."/>
            <person name="Hiraoka Y."/>
            <person name="Horinouchi S."/>
            <person name="Yoshida M."/>
        </authorList>
    </citation>
    <scope>SUBCELLULAR LOCATION [LARGE SCALE ANALYSIS]</scope>
</reference>
<comment type="function">
    <text evidence="1">The PI(3,5)P2 regulatory complex regulates both the synthesis and turnover of phosphatidylinositol 3,5-bisphosphate (PtdIns(3,5)P2). Regulates the synthesis of PtdIns(3,5)P2 by positive activation of FAB1 and by controlling FIG4 localization (By similarity).</text>
</comment>
<comment type="subunit">
    <text evidence="1">Component of the PI(3,5)P2 regulatory complex, composed of ATG18, FIG4, FAB1, VAC14 and VAC7. VAC14 nucleates the assembly of the complex and serves as a scaffold (By similarity).</text>
</comment>
<comment type="subcellular location">
    <subcellularLocation>
        <location evidence="1">Cytoplasm</location>
    </subcellularLocation>
    <subcellularLocation>
        <location evidence="1">Vacuole membrane</location>
        <topology evidence="1">Peripheral membrane protein</topology>
    </subcellularLocation>
</comment>
<comment type="similarity">
    <text evidence="3">Belongs to the VAC14 family.</text>
</comment>
<protein>
    <recommendedName>
        <fullName>Protein VAC14 homolog</fullName>
    </recommendedName>
</protein>
<keyword id="KW-0963">Cytoplasm</keyword>
<keyword id="KW-0472">Membrane</keyword>
<keyword id="KW-1185">Reference proteome</keyword>
<keyword id="KW-0677">Repeat</keyword>
<keyword id="KW-0926">Vacuole</keyword>
<sequence length="811" mass="92453">MDNLLVRGLTHKLYDKRKATAYELERVVKGYLENDETEKIRAVISQLANDFVYSPARGPNATFGGLIGLAAVAIALGPKIDSYMESILLPVLYCFNDSDSKIRYYACESMYNIGKVAKGEVFRYFNLIFDVLCKLFADTEITVKNGAELLDRLIKDIVMQQAATYMSSAEDIKNFKEGPVSSSIQDVPVMSTEQPRMHTFSLSELVPLLSERLYVINPNTRMFLVSWIRLLDSIPDLEFISYLPFLLDGLMNYLSDPNESIRIVTSNCLYDFLREIQKIAKVKYHILQRDEESEPDFFDSMVRRNMSDAELKEISDYVESSLRDGSFILEAHIQIDYKRILEIIIDHLGSSVPLIQEKALKWLFEFIYIAPKDVLLQIPKVLENLLPLMSNDENMRQSAKDLSQNLVILVSKIMDIEFSGSETNNKDNSLSVDFRSLIEVLQKLLSNDNEETRLCALEWVLLLQRRTGGKLINMHDPIFQTLLLQLSDPSDLVVSRTLELLAHIAISHKSVNLVPFLKSLLQMFAEDRKFLNSRGNLIIRQLCNYIEGERVYTSFAGILETEENLELASIMVEVLNNNLFTAPELYDLRKKLKQSAPKLQNIFTTLYTAWCHNSIAVFSLCLLSQNYEHAANLLSVFAEIEFNIDMLIQLDKLVQLIESPVFTYMRLQLLEPEKYPYLHKALYGILMLLPQSSAFRTLRDRLQCSSTPRTNTILANERLPRSRRDDPYWTDLLERLKAVQLSHQNNYREPIRATRLALAGALPSTPTATTISTTTSASGITTTASNSRDSFITRLPPTAALSTGARKKPKQ</sequence>
<name>VAC14_SCHPO</name>
<feature type="chain" id="PRO_0000116490" description="Protein VAC14 homolog">
    <location>
        <begin position="1"/>
        <end position="811"/>
    </location>
</feature>
<feature type="repeat" description="HEAT 1">
    <location>
        <begin position="81"/>
        <end position="119"/>
    </location>
</feature>
<feature type="repeat" description="HEAT 2">
    <location>
        <begin position="122"/>
        <end position="160"/>
    </location>
</feature>
<feature type="repeat" description="HEAT 3">
    <location>
        <begin position="240"/>
        <end position="278"/>
    </location>
</feature>
<feature type="repeat" description="HEAT 4">
    <location>
        <begin position="334"/>
        <end position="372"/>
    </location>
</feature>
<feature type="repeat" description="HEAT 5">
    <location>
        <begin position="375"/>
        <end position="412"/>
    </location>
</feature>
<feature type="repeat" description="HEAT 6">
    <location>
        <begin position="431"/>
        <end position="469"/>
    </location>
</feature>
<feature type="repeat" description="HEAT 7">
    <location>
        <begin position="472"/>
        <end position="510"/>
    </location>
</feature>
<feature type="region of interest" description="Disordered" evidence="2">
    <location>
        <begin position="775"/>
        <end position="811"/>
    </location>
</feature>
<feature type="compositionally biased region" description="Low complexity" evidence="2">
    <location>
        <begin position="775"/>
        <end position="785"/>
    </location>
</feature>
<gene>
    <name type="ORF">SPBC25H2.03</name>
</gene>